<dbReference type="EMBL" id="AP004638">
    <property type="protein sequence ID" value="BAB84232.1"/>
    <property type="molecule type" value="Genomic_DNA"/>
</dbReference>
<dbReference type="RefSeq" id="NP_569645.1">
    <property type="nucleotide sequence ID" value="NC_003386.1"/>
</dbReference>
<dbReference type="SMR" id="Q8WI05"/>
<dbReference type="GeneID" id="2545143"/>
<dbReference type="GO" id="GO:0009535">
    <property type="term" value="C:chloroplast thylakoid membrane"/>
    <property type="evidence" value="ECO:0007669"/>
    <property type="project" value="UniProtKB-SubCell"/>
</dbReference>
<dbReference type="GO" id="GO:0009539">
    <property type="term" value="C:photosystem II reaction center"/>
    <property type="evidence" value="ECO:0007669"/>
    <property type="project" value="InterPro"/>
</dbReference>
<dbReference type="GO" id="GO:0009055">
    <property type="term" value="F:electron transfer activity"/>
    <property type="evidence" value="ECO:0007669"/>
    <property type="project" value="UniProtKB-UniRule"/>
</dbReference>
<dbReference type="GO" id="GO:0020037">
    <property type="term" value="F:heme binding"/>
    <property type="evidence" value="ECO:0007669"/>
    <property type="project" value="InterPro"/>
</dbReference>
<dbReference type="GO" id="GO:0005506">
    <property type="term" value="F:iron ion binding"/>
    <property type="evidence" value="ECO:0007669"/>
    <property type="project" value="UniProtKB-UniRule"/>
</dbReference>
<dbReference type="GO" id="GO:0009767">
    <property type="term" value="P:photosynthetic electron transport chain"/>
    <property type="evidence" value="ECO:0007669"/>
    <property type="project" value="InterPro"/>
</dbReference>
<dbReference type="HAMAP" id="MF_00643">
    <property type="entry name" value="PSII_PsbF"/>
    <property type="match status" value="1"/>
</dbReference>
<dbReference type="InterPro" id="IPR006241">
    <property type="entry name" value="PSII_cyt_b559_bsu"/>
</dbReference>
<dbReference type="InterPro" id="IPR006216">
    <property type="entry name" value="PSII_cyt_b559_CS"/>
</dbReference>
<dbReference type="InterPro" id="IPR013081">
    <property type="entry name" value="PSII_cyt_b559_N"/>
</dbReference>
<dbReference type="NCBIfam" id="TIGR01333">
    <property type="entry name" value="cyt_b559_beta"/>
    <property type="match status" value="1"/>
</dbReference>
<dbReference type="Pfam" id="PF00283">
    <property type="entry name" value="Cytochrom_B559"/>
    <property type="match status" value="1"/>
</dbReference>
<dbReference type="PIRSF" id="PIRSF000037">
    <property type="entry name" value="PsbF"/>
    <property type="match status" value="1"/>
</dbReference>
<dbReference type="SUPFAM" id="SSF161045">
    <property type="entry name" value="Cytochrome b559 subunits"/>
    <property type="match status" value="1"/>
</dbReference>
<dbReference type="PROSITE" id="PS00537">
    <property type="entry name" value="CYTOCHROME_B559"/>
    <property type="match status" value="1"/>
</dbReference>
<feature type="chain" id="PRO_0000200444" description="Cytochrome b559 subunit beta">
    <location>
        <begin position="1"/>
        <end position="39"/>
    </location>
</feature>
<feature type="transmembrane region" description="Helical" evidence="1">
    <location>
        <begin position="14"/>
        <end position="30"/>
    </location>
</feature>
<feature type="binding site" description="axial binding residue" evidence="1">
    <location>
        <position position="18"/>
    </location>
    <ligand>
        <name>heme</name>
        <dbReference type="ChEBI" id="CHEBI:30413"/>
        <note>ligand shared with alpha subunit</note>
    </ligand>
    <ligandPart>
        <name>Fe</name>
        <dbReference type="ChEBI" id="CHEBI:18248"/>
    </ligandPart>
</feature>
<geneLocation type="chloroplast"/>
<accession>Q8WI05</accession>
<evidence type="ECO:0000255" key="1">
    <source>
        <dbReference type="HAMAP-Rule" id="MF_00643"/>
    </source>
</evidence>
<keyword id="KW-0150">Chloroplast</keyword>
<keyword id="KW-0249">Electron transport</keyword>
<keyword id="KW-0349">Heme</keyword>
<keyword id="KW-0408">Iron</keyword>
<keyword id="KW-0472">Membrane</keyword>
<keyword id="KW-0479">Metal-binding</keyword>
<keyword id="KW-0602">Photosynthesis</keyword>
<keyword id="KW-0604">Photosystem II</keyword>
<keyword id="KW-0934">Plastid</keyword>
<keyword id="KW-0793">Thylakoid</keyword>
<keyword id="KW-0812">Transmembrane</keyword>
<keyword id="KW-1133">Transmembrane helix</keyword>
<keyword id="KW-0813">Transport</keyword>
<name>PSBF_PSINU</name>
<gene>
    <name evidence="1" type="primary">psbF</name>
</gene>
<organism>
    <name type="scientific">Psilotum nudum</name>
    <name type="common">Whisk fern</name>
    <name type="synonym">Lycopodium nudum</name>
    <dbReference type="NCBI Taxonomy" id="3240"/>
    <lineage>
        <taxon>Eukaryota</taxon>
        <taxon>Viridiplantae</taxon>
        <taxon>Streptophyta</taxon>
        <taxon>Embryophyta</taxon>
        <taxon>Tracheophyta</taxon>
        <taxon>Polypodiopsida</taxon>
        <taxon>Ophioglossidae</taxon>
        <taxon>Psilotales</taxon>
        <taxon>Psilotaceae</taxon>
        <taxon>Psilotum</taxon>
    </lineage>
</organism>
<protein>
    <recommendedName>
        <fullName evidence="1">Cytochrome b559 subunit beta</fullName>
    </recommendedName>
    <alternativeName>
        <fullName evidence="1">PSII reaction center subunit VI</fullName>
    </alternativeName>
</protein>
<comment type="function">
    <text evidence="1">This b-type cytochrome is tightly associated with the reaction center of photosystem II (PSII). PSII is a light-driven water:plastoquinone oxidoreductase that uses light energy to abstract electrons from H(2)O, generating O(2) and a proton gradient subsequently used for ATP formation. It consists of a core antenna complex that captures photons, and an electron transfer chain that converts photonic excitation into a charge separation.</text>
</comment>
<comment type="cofactor">
    <cofactor evidence="1">
        <name>heme b</name>
        <dbReference type="ChEBI" id="CHEBI:60344"/>
    </cofactor>
    <text evidence="1">With its partner (PsbE) binds heme. PSII binds additional chlorophylls, carotenoids and specific lipids.</text>
</comment>
<comment type="subunit">
    <text evidence="1">Heterodimer of an alpha subunit and a beta subunit. PSII is composed of 1 copy each of membrane proteins PsbA, PsbB, PsbC, PsbD, PsbE, PsbF, PsbH, PsbI, PsbJ, PsbK, PsbL, PsbM, PsbT, PsbX, PsbY, PsbZ, Psb30/Ycf12, at least 3 peripheral proteins of the oxygen-evolving complex and a large number of cofactors. It forms dimeric complexes.</text>
</comment>
<comment type="subcellular location">
    <subcellularLocation>
        <location evidence="1">Plastid</location>
        <location evidence="1">Chloroplast thylakoid membrane</location>
        <topology evidence="1">Single-pass membrane protein</topology>
    </subcellularLocation>
</comment>
<comment type="similarity">
    <text evidence="1">Belongs to the PsbE/PsbF family.</text>
</comment>
<sequence length="39" mass="4498">MTLDRTYPIFTVRWLAIHGLAVPTVFFLGSISAMQFIQR</sequence>
<proteinExistence type="inferred from homology"/>
<reference key="1">
    <citation type="journal article" date="2004" name="Mol. Biol. Evol.">
        <title>Chloroplast phylogeny indicates that bryophytes are monophyletic.</title>
        <authorList>
            <person name="Nishiyama T."/>
            <person name="Wolf P.G."/>
            <person name="Kugita M."/>
            <person name="Sinclair R.B."/>
            <person name="Sugita M."/>
            <person name="Sugiura C."/>
            <person name="Wakasugi T."/>
            <person name="Yamada K."/>
            <person name="Yoshinaga K."/>
            <person name="Yamaguchi K."/>
            <person name="Ueda K."/>
            <person name="Hasebe M."/>
        </authorList>
    </citation>
    <scope>NUCLEOTIDE SEQUENCE [LARGE SCALE GENOMIC DNA]</scope>
    <source>
        <strain>Kingyoku</strain>
    </source>
</reference>